<feature type="chain" id="PRO_0000262005" description="UPF0246 protein Bxeno_A1262">
    <location>
        <begin position="1"/>
        <end position="260"/>
    </location>
</feature>
<gene>
    <name type="ordered locus">Bxeno_A1262</name>
    <name type="ORF">Bxe_A3180</name>
</gene>
<proteinExistence type="inferred from homology"/>
<sequence length="260" mass="29351">MIIVLSPAKSLDYETPPHVKKHTIPDFVEDAAELIGGLRLLSPQQIASLMDISDQLAHLNFQRYAEWSPKFGAHNAKQAVLAFNGDVYEGFNAKTLSAADLDYAQNHVRVLSGLYGLLRPLDLLQPYRLEMGTRFANPRGKDLYAFWGERITQALNAQLKKNAVASRVLVNCASGEYFRSVKPKLLEAPVITPVFEDWKGGRYKIISFHAKRARGLMARYAVENRLDRPEQLKDFNAEGYAFDAEASNDSTYVFRRRVAE</sequence>
<protein>
    <recommendedName>
        <fullName evidence="1">UPF0246 protein Bxeno_A1262</fullName>
    </recommendedName>
</protein>
<dbReference type="EMBL" id="CP000270">
    <property type="protein sequence ID" value="ABE29800.1"/>
    <property type="molecule type" value="Genomic_DNA"/>
</dbReference>
<dbReference type="RefSeq" id="WP_011487519.1">
    <property type="nucleotide sequence ID" value="NC_007951.1"/>
</dbReference>
<dbReference type="SMR" id="Q142D9"/>
<dbReference type="STRING" id="266265.Bxe_A3180"/>
<dbReference type="KEGG" id="bxb:DR64_881"/>
<dbReference type="KEGG" id="bxe:Bxe_A3180"/>
<dbReference type="PATRIC" id="fig|266265.5.peg.1301"/>
<dbReference type="eggNOG" id="COG3022">
    <property type="taxonomic scope" value="Bacteria"/>
</dbReference>
<dbReference type="OrthoDB" id="9777133at2"/>
<dbReference type="Proteomes" id="UP000001817">
    <property type="component" value="Chromosome 1"/>
</dbReference>
<dbReference type="GO" id="GO:0005829">
    <property type="term" value="C:cytosol"/>
    <property type="evidence" value="ECO:0007669"/>
    <property type="project" value="TreeGrafter"/>
</dbReference>
<dbReference type="GO" id="GO:0033194">
    <property type="term" value="P:response to hydroperoxide"/>
    <property type="evidence" value="ECO:0007669"/>
    <property type="project" value="TreeGrafter"/>
</dbReference>
<dbReference type="HAMAP" id="MF_00652">
    <property type="entry name" value="UPF0246"/>
    <property type="match status" value="1"/>
</dbReference>
<dbReference type="InterPro" id="IPR005583">
    <property type="entry name" value="YaaA"/>
</dbReference>
<dbReference type="NCBIfam" id="NF002541">
    <property type="entry name" value="PRK02101.1-1"/>
    <property type="match status" value="1"/>
</dbReference>
<dbReference type="NCBIfam" id="NF002542">
    <property type="entry name" value="PRK02101.1-3"/>
    <property type="match status" value="1"/>
</dbReference>
<dbReference type="PANTHER" id="PTHR30283:SF4">
    <property type="entry name" value="PEROXIDE STRESS RESISTANCE PROTEIN YAAA"/>
    <property type="match status" value="1"/>
</dbReference>
<dbReference type="PANTHER" id="PTHR30283">
    <property type="entry name" value="PEROXIDE STRESS RESPONSE PROTEIN YAAA"/>
    <property type="match status" value="1"/>
</dbReference>
<dbReference type="Pfam" id="PF03883">
    <property type="entry name" value="H2O2_YaaD"/>
    <property type="match status" value="1"/>
</dbReference>
<name>Y1262_PARXL</name>
<keyword id="KW-1185">Reference proteome</keyword>
<accession>Q142D9</accession>
<reference key="1">
    <citation type="journal article" date="2006" name="Proc. Natl. Acad. Sci. U.S.A.">
        <title>Burkholderia xenovorans LB400 harbors a multi-replicon, 9.73-Mbp genome shaped for versatility.</title>
        <authorList>
            <person name="Chain P.S.G."/>
            <person name="Denef V.J."/>
            <person name="Konstantinidis K.T."/>
            <person name="Vergez L.M."/>
            <person name="Agullo L."/>
            <person name="Reyes V.L."/>
            <person name="Hauser L."/>
            <person name="Cordova M."/>
            <person name="Gomez L."/>
            <person name="Gonzalez M."/>
            <person name="Land M."/>
            <person name="Lao V."/>
            <person name="Larimer F."/>
            <person name="LiPuma J.J."/>
            <person name="Mahenthiralingam E."/>
            <person name="Malfatti S.A."/>
            <person name="Marx C.J."/>
            <person name="Parnell J.J."/>
            <person name="Ramette A."/>
            <person name="Richardson P."/>
            <person name="Seeger M."/>
            <person name="Smith D."/>
            <person name="Spilker T."/>
            <person name="Sul W.J."/>
            <person name="Tsoi T.V."/>
            <person name="Ulrich L.E."/>
            <person name="Zhulin I.B."/>
            <person name="Tiedje J.M."/>
        </authorList>
    </citation>
    <scope>NUCLEOTIDE SEQUENCE [LARGE SCALE GENOMIC DNA]</scope>
    <source>
        <strain>LB400</strain>
    </source>
</reference>
<comment type="similarity">
    <text evidence="1">Belongs to the UPF0246 family.</text>
</comment>
<evidence type="ECO:0000255" key="1">
    <source>
        <dbReference type="HAMAP-Rule" id="MF_00652"/>
    </source>
</evidence>
<organism>
    <name type="scientific">Paraburkholderia xenovorans (strain LB400)</name>
    <dbReference type="NCBI Taxonomy" id="266265"/>
    <lineage>
        <taxon>Bacteria</taxon>
        <taxon>Pseudomonadati</taxon>
        <taxon>Pseudomonadota</taxon>
        <taxon>Betaproteobacteria</taxon>
        <taxon>Burkholderiales</taxon>
        <taxon>Burkholderiaceae</taxon>
        <taxon>Paraburkholderia</taxon>
    </lineage>
</organism>